<accession>Q14FU5</accession>
<name>CH10_FRAT1</name>
<comment type="function">
    <text evidence="1">Together with the chaperonin GroEL, plays an essential role in assisting protein folding. The GroEL-GroES system forms a nano-cage that allows encapsulation of the non-native substrate proteins and provides a physical environment optimized to promote and accelerate protein folding. GroES binds to the apical surface of the GroEL ring, thereby capping the opening of the GroEL channel.</text>
</comment>
<comment type="subunit">
    <text evidence="1">Heptamer of 7 subunits arranged in a ring. Interacts with the chaperonin GroEL.</text>
</comment>
<comment type="subcellular location">
    <subcellularLocation>
        <location evidence="1">Cytoplasm</location>
    </subcellularLocation>
</comment>
<comment type="similarity">
    <text evidence="1">Belongs to the GroES chaperonin family.</text>
</comment>
<keyword id="KW-0143">Chaperone</keyword>
<keyword id="KW-0963">Cytoplasm</keyword>
<feature type="chain" id="PRO_1000025259" description="Co-chaperonin GroES">
    <location>
        <begin position="1"/>
        <end position="95"/>
    </location>
</feature>
<reference key="1">
    <citation type="journal article" date="2007" name="PLoS ONE">
        <title>Genome sequencing shows that European isolates of Francisella tularensis subspecies tularensis are almost identical to US laboratory strain Schu S4.</title>
        <authorList>
            <person name="Chaudhuri R.R."/>
            <person name="Ren C.-P."/>
            <person name="Desmond L."/>
            <person name="Vincent G.A."/>
            <person name="Silman N.J."/>
            <person name="Brehm J.K."/>
            <person name="Elmore M.J."/>
            <person name="Hudson M.J."/>
            <person name="Forsman M."/>
            <person name="Isherwood K.E."/>
            <person name="Gurycova D."/>
            <person name="Minton N.P."/>
            <person name="Titball R.W."/>
            <person name="Pallen M.J."/>
            <person name="Vipond R."/>
        </authorList>
    </citation>
    <scope>NUCLEOTIDE SEQUENCE [LARGE SCALE GENOMIC DNA]</scope>
    <source>
        <strain>FSC 198</strain>
    </source>
</reference>
<proteinExistence type="inferred from homology"/>
<dbReference type="EMBL" id="AM286280">
    <property type="protein sequence ID" value="CAL09711.1"/>
    <property type="molecule type" value="Genomic_DNA"/>
</dbReference>
<dbReference type="RefSeq" id="WP_003022662.1">
    <property type="nucleotide sequence ID" value="NC_008245.1"/>
</dbReference>
<dbReference type="SMR" id="Q14FU5"/>
<dbReference type="KEGG" id="ftf:FTF1695"/>
<dbReference type="HOGENOM" id="CLU_132825_2_0_6"/>
<dbReference type="GO" id="GO:0005737">
    <property type="term" value="C:cytoplasm"/>
    <property type="evidence" value="ECO:0007669"/>
    <property type="project" value="UniProtKB-SubCell"/>
</dbReference>
<dbReference type="GO" id="GO:0005524">
    <property type="term" value="F:ATP binding"/>
    <property type="evidence" value="ECO:0007669"/>
    <property type="project" value="InterPro"/>
</dbReference>
<dbReference type="GO" id="GO:0046872">
    <property type="term" value="F:metal ion binding"/>
    <property type="evidence" value="ECO:0007669"/>
    <property type="project" value="TreeGrafter"/>
</dbReference>
<dbReference type="GO" id="GO:0044183">
    <property type="term" value="F:protein folding chaperone"/>
    <property type="evidence" value="ECO:0007669"/>
    <property type="project" value="InterPro"/>
</dbReference>
<dbReference type="GO" id="GO:0051087">
    <property type="term" value="F:protein-folding chaperone binding"/>
    <property type="evidence" value="ECO:0007669"/>
    <property type="project" value="TreeGrafter"/>
</dbReference>
<dbReference type="GO" id="GO:0051082">
    <property type="term" value="F:unfolded protein binding"/>
    <property type="evidence" value="ECO:0007669"/>
    <property type="project" value="TreeGrafter"/>
</dbReference>
<dbReference type="GO" id="GO:0051085">
    <property type="term" value="P:chaperone cofactor-dependent protein refolding"/>
    <property type="evidence" value="ECO:0007669"/>
    <property type="project" value="TreeGrafter"/>
</dbReference>
<dbReference type="CDD" id="cd00320">
    <property type="entry name" value="cpn10"/>
    <property type="match status" value="1"/>
</dbReference>
<dbReference type="FunFam" id="2.30.33.40:FF:000001">
    <property type="entry name" value="10 kDa chaperonin"/>
    <property type="match status" value="1"/>
</dbReference>
<dbReference type="Gene3D" id="2.30.33.40">
    <property type="entry name" value="GroES chaperonin"/>
    <property type="match status" value="1"/>
</dbReference>
<dbReference type="HAMAP" id="MF_00580">
    <property type="entry name" value="CH10"/>
    <property type="match status" value="1"/>
</dbReference>
<dbReference type="InterPro" id="IPR020818">
    <property type="entry name" value="Chaperonin_GroES"/>
</dbReference>
<dbReference type="InterPro" id="IPR037124">
    <property type="entry name" value="Chaperonin_GroES_sf"/>
</dbReference>
<dbReference type="InterPro" id="IPR018369">
    <property type="entry name" value="Chaprnonin_Cpn10_CS"/>
</dbReference>
<dbReference type="InterPro" id="IPR011032">
    <property type="entry name" value="GroES-like_sf"/>
</dbReference>
<dbReference type="NCBIfam" id="NF001527">
    <property type="entry name" value="PRK00364.1-2"/>
    <property type="match status" value="1"/>
</dbReference>
<dbReference type="NCBIfam" id="NF001531">
    <property type="entry name" value="PRK00364.2-2"/>
    <property type="match status" value="1"/>
</dbReference>
<dbReference type="NCBIfam" id="NF001533">
    <property type="entry name" value="PRK00364.2-4"/>
    <property type="match status" value="1"/>
</dbReference>
<dbReference type="PANTHER" id="PTHR10772">
    <property type="entry name" value="10 KDA HEAT SHOCK PROTEIN"/>
    <property type="match status" value="1"/>
</dbReference>
<dbReference type="PANTHER" id="PTHR10772:SF58">
    <property type="entry name" value="CO-CHAPERONIN GROES"/>
    <property type="match status" value="1"/>
</dbReference>
<dbReference type="Pfam" id="PF00166">
    <property type="entry name" value="Cpn10"/>
    <property type="match status" value="1"/>
</dbReference>
<dbReference type="PRINTS" id="PR00297">
    <property type="entry name" value="CHAPERONIN10"/>
</dbReference>
<dbReference type="SMART" id="SM00883">
    <property type="entry name" value="Cpn10"/>
    <property type="match status" value="1"/>
</dbReference>
<dbReference type="SUPFAM" id="SSF50129">
    <property type="entry name" value="GroES-like"/>
    <property type="match status" value="1"/>
</dbReference>
<dbReference type="PROSITE" id="PS00681">
    <property type="entry name" value="CHAPERONINS_CPN10"/>
    <property type="match status" value="1"/>
</dbReference>
<sequence>MNIRPLQDRVLVRRAEEEKKSAGGIILTGSAQEKPSQGEVVAVGNGKKLDNGTTLPMDVKVGDKVLFGKYSGSEVKVGDETLLMMREEDIMGIIA</sequence>
<gene>
    <name evidence="1" type="primary">groES</name>
    <name evidence="1" type="synonym">groS</name>
    <name type="ordered locus">FTF1695</name>
</gene>
<evidence type="ECO:0000255" key="1">
    <source>
        <dbReference type="HAMAP-Rule" id="MF_00580"/>
    </source>
</evidence>
<organism>
    <name type="scientific">Francisella tularensis subsp. tularensis (strain FSC 198)</name>
    <dbReference type="NCBI Taxonomy" id="393115"/>
    <lineage>
        <taxon>Bacteria</taxon>
        <taxon>Pseudomonadati</taxon>
        <taxon>Pseudomonadota</taxon>
        <taxon>Gammaproteobacteria</taxon>
        <taxon>Thiotrichales</taxon>
        <taxon>Francisellaceae</taxon>
        <taxon>Francisella</taxon>
    </lineage>
</organism>
<protein>
    <recommendedName>
        <fullName evidence="1">Co-chaperonin GroES</fullName>
    </recommendedName>
    <alternativeName>
        <fullName evidence="1">10 kDa chaperonin</fullName>
    </alternativeName>
    <alternativeName>
        <fullName evidence="1">Chaperonin-10</fullName>
        <shortName evidence="1">Cpn10</shortName>
    </alternativeName>
</protein>